<sequence>MSSLIEYPLVTEKAMDEMDFDNKLQFIVDTDATKDEIENEIESRYEITIIDTKTQITPRAKKKATVRLSDDDDAQDIASRIGVF</sequence>
<accession>Q18GF1</accession>
<protein>
    <recommendedName>
        <fullName evidence="1">Large ribosomal subunit protein uL23</fullName>
    </recommendedName>
    <alternativeName>
        <fullName evidence="2">50S ribosomal protein L23</fullName>
    </alternativeName>
</protein>
<keyword id="KW-1185">Reference proteome</keyword>
<keyword id="KW-0687">Ribonucleoprotein</keyword>
<keyword id="KW-0689">Ribosomal protein</keyword>
<keyword id="KW-0694">RNA-binding</keyword>
<keyword id="KW-0699">rRNA-binding</keyword>
<reference key="1">
    <citation type="journal article" date="2006" name="BMC Genomics">
        <title>The genome of the square archaeon Haloquadratum walsbyi: life at the limits of water activity.</title>
        <authorList>
            <person name="Bolhuis H."/>
            <person name="Palm P."/>
            <person name="Wende A."/>
            <person name="Falb M."/>
            <person name="Rampp M."/>
            <person name="Rodriguez-Valera F."/>
            <person name="Pfeiffer F."/>
            <person name="Oesterhelt D."/>
        </authorList>
    </citation>
    <scope>NUCLEOTIDE SEQUENCE [LARGE SCALE GENOMIC DNA]</scope>
    <source>
        <strain>DSM 16790 / HBSQ001</strain>
    </source>
</reference>
<evidence type="ECO:0000255" key="1">
    <source>
        <dbReference type="HAMAP-Rule" id="MF_01369"/>
    </source>
</evidence>
<evidence type="ECO:0000305" key="2"/>
<gene>
    <name evidence="1" type="primary">rpl23</name>
    <name type="ordered locus">HQ_2840A</name>
</gene>
<feature type="chain" id="PRO_0000272940" description="Large ribosomal subunit protein uL23">
    <location>
        <begin position="1"/>
        <end position="84"/>
    </location>
</feature>
<proteinExistence type="inferred from homology"/>
<organism>
    <name type="scientific">Haloquadratum walsbyi (strain DSM 16790 / HBSQ001)</name>
    <dbReference type="NCBI Taxonomy" id="362976"/>
    <lineage>
        <taxon>Archaea</taxon>
        <taxon>Methanobacteriati</taxon>
        <taxon>Methanobacteriota</taxon>
        <taxon>Stenosarchaea group</taxon>
        <taxon>Halobacteria</taxon>
        <taxon>Halobacteriales</taxon>
        <taxon>Haloferacaceae</taxon>
        <taxon>Haloquadratum</taxon>
    </lineage>
</organism>
<name>RL23_HALWD</name>
<dbReference type="EMBL" id="AM180088">
    <property type="protein sequence ID" value="CAJ52947.1"/>
    <property type="molecule type" value="Genomic_DNA"/>
</dbReference>
<dbReference type="RefSeq" id="WP_011572060.1">
    <property type="nucleotide sequence ID" value="NC_008212.1"/>
</dbReference>
<dbReference type="SMR" id="Q18GF1"/>
<dbReference type="STRING" id="362976.HQ_2840A"/>
<dbReference type="GeneID" id="4194613"/>
<dbReference type="KEGG" id="hwa:HQ_2840A"/>
<dbReference type="eggNOG" id="arCOG04072">
    <property type="taxonomic scope" value="Archaea"/>
</dbReference>
<dbReference type="HOGENOM" id="CLU_037562_4_2_2"/>
<dbReference type="Proteomes" id="UP000001975">
    <property type="component" value="Chromosome"/>
</dbReference>
<dbReference type="GO" id="GO:1990904">
    <property type="term" value="C:ribonucleoprotein complex"/>
    <property type="evidence" value="ECO:0007669"/>
    <property type="project" value="UniProtKB-KW"/>
</dbReference>
<dbReference type="GO" id="GO:0005840">
    <property type="term" value="C:ribosome"/>
    <property type="evidence" value="ECO:0007669"/>
    <property type="project" value="UniProtKB-KW"/>
</dbReference>
<dbReference type="GO" id="GO:0019843">
    <property type="term" value="F:rRNA binding"/>
    <property type="evidence" value="ECO:0007669"/>
    <property type="project" value="UniProtKB-UniRule"/>
</dbReference>
<dbReference type="GO" id="GO:0003735">
    <property type="term" value="F:structural constituent of ribosome"/>
    <property type="evidence" value="ECO:0007669"/>
    <property type="project" value="InterPro"/>
</dbReference>
<dbReference type="GO" id="GO:0006412">
    <property type="term" value="P:translation"/>
    <property type="evidence" value="ECO:0007669"/>
    <property type="project" value="UniProtKB-UniRule"/>
</dbReference>
<dbReference type="FunFam" id="3.30.70.330:FF:000532">
    <property type="entry name" value="50S ribosomal protein L23"/>
    <property type="match status" value="1"/>
</dbReference>
<dbReference type="Gene3D" id="3.30.70.330">
    <property type="match status" value="1"/>
</dbReference>
<dbReference type="HAMAP" id="MF_01369_A">
    <property type="entry name" value="Ribosomal_uL23_A"/>
    <property type="match status" value="1"/>
</dbReference>
<dbReference type="InterPro" id="IPR012677">
    <property type="entry name" value="Nucleotide-bd_a/b_plait_sf"/>
</dbReference>
<dbReference type="InterPro" id="IPR019985">
    <property type="entry name" value="Ribosomal_uL23"/>
</dbReference>
<dbReference type="InterPro" id="IPR013025">
    <property type="entry name" value="Ribosomal_uL23-like"/>
</dbReference>
<dbReference type="InterPro" id="IPR012678">
    <property type="entry name" value="Ribosomal_uL23/eL15/eS24_sf"/>
</dbReference>
<dbReference type="InterPro" id="IPR001014">
    <property type="entry name" value="Ribosomal_uL23_CS"/>
</dbReference>
<dbReference type="NCBIfam" id="NF011118">
    <property type="entry name" value="PRK14548.1"/>
    <property type="match status" value="1"/>
</dbReference>
<dbReference type="NCBIfam" id="TIGR03636">
    <property type="entry name" value="uL23_arch"/>
    <property type="match status" value="1"/>
</dbReference>
<dbReference type="PANTHER" id="PTHR11620">
    <property type="entry name" value="60S RIBOSOMAL PROTEIN L23A"/>
    <property type="match status" value="1"/>
</dbReference>
<dbReference type="Pfam" id="PF00276">
    <property type="entry name" value="Ribosomal_L23"/>
    <property type="match status" value="1"/>
</dbReference>
<dbReference type="SUPFAM" id="SSF54189">
    <property type="entry name" value="Ribosomal proteins S24e, L23 and L15e"/>
    <property type="match status" value="1"/>
</dbReference>
<dbReference type="PROSITE" id="PS00050">
    <property type="entry name" value="RIBOSOMAL_L23"/>
    <property type="match status" value="1"/>
</dbReference>
<comment type="function">
    <text evidence="1">Binds to 23S rRNA. One of the proteins that surrounds the polypeptide exit tunnel on the outside of the ribosome.</text>
</comment>
<comment type="subunit">
    <text evidence="1">Part of the 50S ribosomal subunit. Contacts protein L29.</text>
</comment>
<comment type="similarity">
    <text evidence="1">Belongs to the universal ribosomal protein uL23 family.</text>
</comment>